<feature type="chain" id="PRO_1000083472" description="Formyl-CoA:oxalate CoA-transferase">
    <location>
        <begin position="1"/>
        <end position="416"/>
    </location>
</feature>
<feature type="active site" description="Nucleophile" evidence="2">
    <location>
        <position position="169"/>
    </location>
</feature>
<feature type="binding site" evidence="1">
    <location>
        <begin position="17"/>
        <end position="18"/>
    </location>
    <ligand>
        <name>CoA</name>
        <dbReference type="ChEBI" id="CHEBI:57287"/>
    </ligand>
</feature>
<feature type="binding site" evidence="2">
    <location>
        <position position="38"/>
    </location>
    <ligand>
        <name>CoA</name>
        <dbReference type="ChEBI" id="CHEBI:57287"/>
    </ligand>
</feature>
<feature type="binding site" evidence="1">
    <location>
        <begin position="72"/>
        <end position="75"/>
    </location>
    <ligand>
        <name>CoA</name>
        <dbReference type="ChEBI" id="CHEBI:57287"/>
    </ligand>
</feature>
<feature type="binding site" evidence="1">
    <location>
        <begin position="96"/>
        <end position="98"/>
    </location>
    <ligand>
        <name>CoA</name>
        <dbReference type="ChEBI" id="CHEBI:57287"/>
    </ligand>
</feature>
<feature type="binding site" evidence="2">
    <location>
        <position position="104"/>
    </location>
    <ligand>
        <name>CoA</name>
        <dbReference type="ChEBI" id="CHEBI:57287"/>
    </ligand>
</feature>
<feature type="binding site" evidence="1">
    <location>
        <begin position="137"/>
        <end position="140"/>
    </location>
    <ligand>
        <name>CoA</name>
        <dbReference type="ChEBI" id="CHEBI:57287"/>
    </ligand>
</feature>
<feature type="binding site" evidence="1">
    <location>
        <begin position="248"/>
        <end position="250"/>
    </location>
    <ligand>
        <name>substrate</name>
    </ligand>
</feature>
<feature type="binding site" evidence="1">
    <location>
        <begin position="273"/>
        <end position="275"/>
    </location>
    <ligand>
        <name>CoA</name>
        <dbReference type="ChEBI" id="CHEBI:57287"/>
    </ligand>
</feature>
<gene>
    <name evidence="2" type="primary">frc</name>
    <name type="ordered locus">EcolC_1295</name>
</gene>
<sequence length="416" mass="45828">MSTPLQGIKVLDFTGVQSGPSCTQMLAWFGADVIKIERPGVGDVTRHQLRDIPDIDALYFTMLNSNKRSIELNTKTAEGKEVMEKLIREADILVENFHPGAIDHMGFTWEHIQEINPRLIFGSIKGFDECSPYVNVKAYENVAQAAGGAASTTGFWDGPPLVSAAALGDSNTGMHLLIGLLAALLHREKTGRGQRVTMSMQDAVLNLCRVKLRDQQRLDKLGYLEEYPQYPNGTFGDAVPRGGNAGGGGQPGWILKCKGWETDPNAYIYFTIQEQNWENTCKAIGKPEWITDPAYSTAHARQPHIFDIFAEIEKYTVTIDKHEAVAYLTQFDIPCAPVLSMKEISLDPSLRQSGSVVEVEQPLRGKYLTVGCPMKFSAFTPDIKAAPLLGEHTAAVLQELGYSDDEIAAMKQNHAI</sequence>
<name>FCTA_ECOLC</name>
<accession>B1IX88</accession>
<evidence type="ECO:0000250" key="1"/>
<evidence type="ECO:0000255" key="2">
    <source>
        <dbReference type="HAMAP-Rule" id="MF_00742"/>
    </source>
</evidence>
<dbReference type="EC" id="2.8.3.16" evidence="2"/>
<dbReference type="EMBL" id="CP000946">
    <property type="protein sequence ID" value="ACA76961.1"/>
    <property type="molecule type" value="Genomic_DNA"/>
</dbReference>
<dbReference type="RefSeq" id="WP_000106759.1">
    <property type="nucleotide sequence ID" value="NZ_MTFT01000028.1"/>
</dbReference>
<dbReference type="SMR" id="B1IX88"/>
<dbReference type="GeneID" id="75202557"/>
<dbReference type="KEGG" id="ecl:EcolC_1295"/>
<dbReference type="HOGENOM" id="CLU_033975_2_1_6"/>
<dbReference type="UniPathway" id="UPA00540">
    <property type="reaction ID" value="UER00598"/>
</dbReference>
<dbReference type="GO" id="GO:0033608">
    <property type="term" value="F:formyl-CoA transferase activity"/>
    <property type="evidence" value="ECO:0007669"/>
    <property type="project" value="UniProtKB-EC"/>
</dbReference>
<dbReference type="GO" id="GO:0033611">
    <property type="term" value="P:oxalate catabolic process"/>
    <property type="evidence" value="ECO:0007669"/>
    <property type="project" value="UniProtKB-UniRule"/>
</dbReference>
<dbReference type="Gene3D" id="3.40.50.10540">
    <property type="entry name" value="Crotonobetainyl-coa:carnitine coa-transferase, domain 1"/>
    <property type="match status" value="1"/>
</dbReference>
<dbReference type="Gene3D" id="3.30.1540.10">
    <property type="entry name" value="formyl-coa transferase, domain 3"/>
    <property type="match status" value="1"/>
</dbReference>
<dbReference type="HAMAP" id="MF_00742">
    <property type="entry name" value="Formyl_CoA_transfer"/>
    <property type="match status" value="1"/>
</dbReference>
<dbReference type="InterPro" id="IPR050483">
    <property type="entry name" value="CoA-transferase_III_domain"/>
</dbReference>
<dbReference type="InterPro" id="IPR003673">
    <property type="entry name" value="CoA-Trfase_fam_III"/>
</dbReference>
<dbReference type="InterPro" id="IPR044855">
    <property type="entry name" value="CoA-Trfase_III_dom3_sf"/>
</dbReference>
<dbReference type="InterPro" id="IPR023606">
    <property type="entry name" value="CoA-Trfase_III_dom_1_sf"/>
</dbReference>
<dbReference type="InterPro" id="IPR017659">
    <property type="entry name" value="Formyl_CoA_transfer"/>
</dbReference>
<dbReference type="NCBIfam" id="TIGR03253">
    <property type="entry name" value="oxalate_frc"/>
    <property type="match status" value="1"/>
</dbReference>
<dbReference type="NCBIfam" id="NF003809">
    <property type="entry name" value="PRK05398.1"/>
    <property type="match status" value="1"/>
</dbReference>
<dbReference type="PANTHER" id="PTHR48207">
    <property type="entry name" value="SUCCINATE--HYDROXYMETHYLGLUTARATE COA-TRANSFERASE"/>
    <property type="match status" value="1"/>
</dbReference>
<dbReference type="PANTHER" id="PTHR48207:SF3">
    <property type="entry name" value="SUCCINATE--HYDROXYMETHYLGLUTARATE COA-TRANSFERASE"/>
    <property type="match status" value="1"/>
</dbReference>
<dbReference type="Pfam" id="PF02515">
    <property type="entry name" value="CoA_transf_3"/>
    <property type="match status" value="1"/>
</dbReference>
<dbReference type="SUPFAM" id="SSF89796">
    <property type="entry name" value="CoA-transferase family III (CaiB/BaiF)"/>
    <property type="match status" value="1"/>
</dbReference>
<keyword id="KW-0808">Transferase</keyword>
<comment type="function">
    <text evidence="1">Involved in the catabolism of oxalate and in the adapatation to low pH via the induction of the oxalate-dependent acid tolerance response (ATR). Catalyzes the transfer of the CoA moiety from formyl-CoA to oxalate (By similarity).</text>
</comment>
<comment type="catalytic activity">
    <reaction evidence="2">
        <text>formyl-CoA + oxalate = oxalyl-CoA + formate</text>
        <dbReference type="Rhea" id="RHEA:16545"/>
        <dbReference type="ChEBI" id="CHEBI:15740"/>
        <dbReference type="ChEBI" id="CHEBI:30623"/>
        <dbReference type="ChEBI" id="CHEBI:57376"/>
        <dbReference type="ChEBI" id="CHEBI:57388"/>
        <dbReference type="EC" id="2.8.3.16"/>
    </reaction>
</comment>
<comment type="pathway">
    <text evidence="2">Metabolic intermediate degradation; oxalate degradation; CO(2) and formate from oxalate: step 1/2.</text>
</comment>
<comment type="subunit">
    <text evidence="2">Homodimer.</text>
</comment>
<comment type="similarity">
    <text evidence="2">Belongs to the CoA-transferase III family. Frc subfamily.</text>
</comment>
<proteinExistence type="inferred from homology"/>
<organism>
    <name type="scientific">Escherichia coli (strain ATCC 8739 / DSM 1576 / NBRC 3972 / NCIMB 8545 / WDCM 00012 / Crooks)</name>
    <dbReference type="NCBI Taxonomy" id="481805"/>
    <lineage>
        <taxon>Bacteria</taxon>
        <taxon>Pseudomonadati</taxon>
        <taxon>Pseudomonadota</taxon>
        <taxon>Gammaproteobacteria</taxon>
        <taxon>Enterobacterales</taxon>
        <taxon>Enterobacteriaceae</taxon>
        <taxon>Escherichia</taxon>
    </lineage>
</organism>
<protein>
    <recommendedName>
        <fullName>Formyl-CoA:oxalate CoA-transferase</fullName>
        <shortName>FCOCT</shortName>
        <ecNumber evidence="2">2.8.3.16</ecNumber>
    </recommendedName>
    <alternativeName>
        <fullName evidence="2">Formyl-coenzyme A transferase</fullName>
        <shortName evidence="2">Formyl-CoA transferase</shortName>
    </alternativeName>
</protein>
<reference key="1">
    <citation type="submission" date="2008-02" db="EMBL/GenBank/DDBJ databases">
        <title>Complete sequence of Escherichia coli C str. ATCC 8739.</title>
        <authorList>
            <person name="Copeland A."/>
            <person name="Lucas S."/>
            <person name="Lapidus A."/>
            <person name="Glavina del Rio T."/>
            <person name="Dalin E."/>
            <person name="Tice H."/>
            <person name="Bruce D."/>
            <person name="Goodwin L."/>
            <person name="Pitluck S."/>
            <person name="Kiss H."/>
            <person name="Brettin T."/>
            <person name="Detter J.C."/>
            <person name="Han C."/>
            <person name="Kuske C.R."/>
            <person name="Schmutz J."/>
            <person name="Larimer F."/>
            <person name="Land M."/>
            <person name="Hauser L."/>
            <person name="Kyrpides N."/>
            <person name="Mikhailova N."/>
            <person name="Ingram L."/>
            <person name="Richardson P."/>
        </authorList>
    </citation>
    <scope>NUCLEOTIDE SEQUENCE [LARGE SCALE GENOMIC DNA]</scope>
    <source>
        <strain>ATCC 8739 / DSM 1576 / NBRC 3972 / NCIMB 8545 / WDCM 00012 / Crooks</strain>
    </source>
</reference>